<proteinExistence type="inferred from homology"/>
<gene>
    <name evidence="1" type="primary">secA</name>
    <name type="ordered locus">BBR47_53090</name>
</gene>
<organism>
    <name type="scientific">Brevibacillus brevis (strain 47 / JCM 6285 / NBRC 100599)</name>
    <dbReference type="NCBI Taxonomy" id="358681"/>
    <lineage>
        <taxon>Bacteria</taxon>
        <taxon>Bacillati</taxon>
        <taxon>Bacillota</taxon>
        <taxon>Bacilli</taxon>
        <taxon>Bacillales</taxon>
        <taxon>Paenibacillaceae</taxon>
        <taxon>Brevibacillus</taxon>
    </lineage>
</organism>
<reference key="1">
    <citation type="submission" date="2005-03" db="EMBL/GenBank/DDBJ databases">
        <title>Brevibacillus brevis strain 47, complete genome.</title>
        <authorList>
            <person name="Hosoyama A."/>
            <person name="Yamada R."/>
            <person name="Hongo Y."/>
            <person name="Terui Y."/>
            <person name="Ankai A."/>
            <person name="Masuyama W."/>
            <person name="Sekiguchi M."/>
            <person name="Takeda T."/>
            <person name="Asano K."/>
            <person name="Ohji S."/>
            <person name="Ichikawa N."/>
            <person name="Narita S."/>
            <person name="Aoki N."/>
            <person name="Miura H."/>
            <person name="Matsushita S."/>
            <person name="Sekigawa T."/>
            <person name="Yamagata H."/>
            <person name="Yoshikawa H."/>
            <person name="Udaka S."/>
            <person name="Tanikawa S."/>
            <person name="Fujita N."/>
        </authorList>
    </citation>
    <scope>NUCLEOTIDE SEQUENCE [LARGE SCALE GENOMIC DNA]</scope>
    <source>
        <strain>47 / JCM 6285 / NBRC 100599</strain>
    </source>
</reference>
<protein>
    <recommendedName>
        <fullName evidence="1">Protein translocase subunit SecA</fullName>
        <ecNumber evidence="1">7.4.2.8</ecNumber>
    </recommendedName>
</protein>
<comment type="function">
    <text evidence="1">Part of the Sec protein translocase complex. Interacts with the SecYEG preprotein conducting channel. Has a central role in coupling the hydrolysis of ATP to the transfer of proteins into and across the cell membrane, serving as an ATP-driven molecular motor driving the stepwise translocation of polypeptide chains across the membrane.</text>
</comment>
<comment type="catalytic activity">
    <reaction evidence="1">
        <text>ATP + H2O + cellular proteinSide 1 = ADP + phosphate + cellular proteinSide 2.</text>
        <dbReference type="EC" id="7.4.2.8"/>
    </reaction>
</comment>
<comment type="subunit">
    <text evidence="1">Monomer and homodimer. Part of the essential Sec protein translocation apparatus which comprises SecA, SecYEG and auxiliary proteins SecDF. Other proteins may also be involved.</text>
</comment>
<comment type="subcellular location">
    <subcellularLocation>
        <location evidence="1">Cell membrane</location>
        <topology evidence="1">Peripheral membrane protein</topology>
        <orientation evidence="1">Cytoplasmic side</orientation>
    </subcellularLocation>
    <subcellularLocation>
        <location evidence="1">Cytoplasm</location>
    </subcellularLocation>
    <text evidence="1">Distribution is 50-50.</text>
</comment>
<comment type="similarity">
    <text evidence="1">Belongs to the SecA family.</text>
</comment>
<feature type="chain" id="PRO_1000184217" description="Protein translocase subunit SecA">
    <location>
        <begin position="1"/>
        <end position="839"/>
    </location>
</feature>
<feature type="region of interest" description="Disordered" evidence="2">
    <location>
        <begin position="794"/>
        <end position="839"/>
    </location>
</feature>
<feature type="compositionally biased region" description="Basic and acidic residues" evidence="2">
    <location>
        <begin position="807"/>
        <end position="833"/>
    </location>
</feature>
<feature type="binding site" evidence="1">
    <location>
        <position position="86"/>
    </location>
    <ligand>
        <name>ATP</name>
        <dbReference type="ChEBI" id="CHEBI:30616"/>
    </ligand>
</feature>
<feature type="binding site" evidence="1">
    <location>
        <begin position="104"/>
        <end position="108"/>
    </location>
    <ligand>
        <name>ATP</name>
        <dbReference type="ChEBI" id="CHEBI:30616"/>
    </ligand>
</feature>
<feature type="binding site" evidence="1">
    <location>
        <position position="493"/>
    </location>
    <ligand>
        <name>ATP</name>
        <dbReference type="ChEBI" id="CHEBI:30616"/>
    </ligand>
</feature>
<sequence length="839" mass="95271">MLGLVKKIFGDSNEREVKKMFKRVESINALEPTIKALSDDQLREKTAEFKARLANGEELDKILNEAFAVVREASIRVLGMRHFDVQMIGGMVLQEGRISEMKTGEGKTLVATLATYLNALMGKGVHVVTVNEYLAERDSSIMGKLYNFLGLTVGLNKNGLNPEEKREAYACDITYGTNNEFGFDYLRDNMVLYKEQMVQRPLFFAIIDEVDSILIDEARTPLIISGSANKSTELYYICSHFVKRLEEEKDFTIDEKLKIVNLTDDGVSKVEQAFNIDNLYDTAHITLNHHITAALKAQVLFKRDVDYVVQEGEVVIVDEFTGRLMVGRRYSDGLHQAIEAKEGLRVQSESMTLATITLQNYFRMYEKLAGMTGTAKTEEEEFKKIYGLDVVVIPTNKPVQRVDSPDLVFKTEAAKYRAVVNDIVERHKKGQPILVGTISIENSERLSQMLKQKGVPHNVLNAKQHEREAEIVARAGVYGAVTIATNMAGRGTDIQLGEGVAELGGLHIIGTERHESRRIDNQLRGRAGRQGDPGSSQFFLSMQDELMRRFGADNIMNMMDRLGMEEDMPIESRLVTRAVESAQKRVEGSNFDARKGVLQYDDVMNQQRLVVYKQRKDILEHENLSDVALNMIYAVMERAVSLHCPKEEVPEDWDLQALADAANNGFLYEETITAKMLKGMEAEEILELLKAEVDKQYKQREEEIGESIREFEKVVILRAVDSKWMDHIDAMDQLRQGIHLRAYAQNDPLREYQFEGYEMYQGMLAAVQEEVAMYIMKAEVSQNLERQDVIRGQGIDMDNLQTSGPSDRPDPETSGDADPKNRAQRRAQEQERKRQNKKQ</sequence>
<name>SECA_BREBN</name>
<evidence type="ECO:0000255" key="1">
    <source>
        <dbReference type="HAMAP-Rule" id="MF_01382"/>
    </source>
</evidence>
<evidence type="ECO:0000256" key="2">
    <source>
        <dbReference type="SAM" id="MobiDB-lite"/>
    </source>
</evidence>
<keyword id="KW-0067">ATP-binding</keyword>
<keyword id="KW-1003">Cell membrane</keyword>
<keyword id="KW-0963">Cytoplasm</keyword>
<keyword id="KW-0472">Membrane</keyword>
<keyword id="KW-0547">Nucleotide-binding</keyword>
<keyword id="KW-0653">Protein transport</keyword>
<keyword id="KW-1185">Reference proteome</keyword>
<keyword id="KW-1278">Translocase</keyword>
<keyword id="KW-0811">Translocation</keyword>
<keyword id="KW-0813">Transport</keyword>
<dbReference type="EC" id="7.4.2.8" evidence="1"/>
<dbReference type="EMBL" id="AP008955">
    <property type="protein sequence ID" value="BAH46286.1"/>
    <property type="molecule type" value="Genomic_DNA"/>
</dbReference>
<dbReference type="RefSeq" id="WP_015893535.1">
    <property type="nucleotide sequence ID" value="NC_012491.1"/>
</dbReference>
<dbReference type="SMR" id="C0Z6T7"/>
<dbReference type="STRING" id="358681.BBR47_53090"/>
<dbReference type="KEGG" id="bbe:BBR47_53090"/>
<dbReference type="eggNOG" id="COG0653">
    <property type="taxonomic scope" value="Bacteria"/>
</dbReference>
<dbReference type="HOGENOM" id="CLU_005314_3_0_9"/>
<dbReference type="Proteomes" id="UP000001877">
    <property type="component" value="Chromosome"/>
</dbReference>
<dbReference type="GO" id="GO:0031522">
    <property type="term" value="C:cell envelope Sec protein transport complex"/>
    <property type="evidence" value="ECO:0007669"/>
    <property type="project" value="TreeGrafter"/>
</dbReference>
<dbReference type="GO" id="GO:0005829">
    <property type="term" value="C:cytosol"/>
    <property type="evidence" value="ECO:0007669"/>
    <property type="project" value="TreeGrafter"/>
</dbReference>
<dbReference type="GO" id="GO:0005886">
    <property type="term" value="C:plasma membrane"/>
    <property type="evidence" value="ECO:0007669"/>
    <property type="project" value="UniProtKB-SubCell"/>
</dbReference>
<dbReference type="GO" id="GO:0005524">
    <property type="term" value="F:ATP binding"/>
    <property type="evidence" value="ECO:0007669"/>
    <property type="project" value="UniProtKB-UniRule"/>
</dbReference>
<dbReference type="GO" id="GO:0008564">
    <property type="term" value="F:protein-exporting ATPase activity"/>
    <property type="evidence" value="ECO:0007669"/>
    <property type="project" value="UniProtKB-EC"/>
</dbReference>
<dbReference type="GO" id="GO:0065002">
    <property type="term" value="P:intracellular protein transmembrane transport"/>
    <property type="evidence" value="ECO:0007669"/>
    <property type="project" value="UniProtKB-UniRule"/>
</dbReference>
<dbReference type="GO" id="GO:0017038">
    <property type="term" value="P:protein import"/>
    <property type="evidence" value="ECO:0007669"/>
    <property type="project" value="InterPro"/>
</dbReference>
<dbReference type="GO" id="GO:0006605">
    <property type="term" value="P:protein targeting"/>
    <property type="evidence" value="ECO:0007669"/>
    <property type="project" value="UniProtKB-UniRule"/>
</dbReference>
<dbReference type="GO" id="GO:0043952">
    <property type="term" value="P:protein transport by the Sec complex"/>
    <property type="evidence" value="ECO:0007669"/>
    <property type="project" value="TreeGrafter"/>
</dbReference>
<dbReference type="CDD" id="cd17928">
    <property type="entry name" value="DEXDc_SecA"/>
    <property type="match status" value="1"/>
</dbReference>
<dbReference type="CDD" id="cd18803">
    <property type="entry name" value="SF2_C_secA"/>
    <property type="match status" value="1"/>
</dbReference>
<dbReference type="FunFam" id="1.10.3060.10:FF:000002">
    <property type="entry name" value="Preprotein translocase subunit SecA"/>
    <property type="match status" value="1"/>
</dbReference>
<dbReference type="FunFam" id="3.40.50.300:FF:000429">
    <property type="entry name" value="Preprotein translocase subunit SecA"/>
    <property type="match status" value="1"/>
</dbReference>
<dbReference type="FunFam" id="3.90.1440.10:FF:000001">
    <property type="entry name" value="Preprotein translocase subunit SecA"/>
    <property type="match status" value="1"/>
</dbReference>
<dbReference type="FunFam" id="3.40.50.300:FF:000334">
    <property type="entry name" value="Protein translocase subunit SecA"/>
    <property type="match status" value="1"/>
</dbReference>
<dbReference type="Gene3D" id="1.10.3060.10">
    <property type="entry name" value="Helical scaffold and wing domains of SecA"/>
    <property type="match status" value="1"/>
</dbReference>
<dbReference type="Gene3D" id="3.40.50.300">
    <property type="entry name" value="P-loop containing nucleotide triphosphate hydrolases"/>
    <property type="match status" value="3"/>
</dbReference>
<dbReference type="Gene3D" id="3.90.1440.10">
    <property type="entry name" value="SecA, preprotein cross-linking domain"/>
    <property type="match status" value="1"/>
</dbReference>
<dbReference type="HAMAP" id="MF_01382">
    <property type="entry name" value="SecA"/>
    <property type="match status" value="1"/>
</dbReference>
<dbReference type="InterPro" id="IPR014001">
    <property type="entry name" value="Helicase_ATP-bd"/>
</dbReference>
<dbReference type="InterPro" id="IPR001650">
    <property type="entry name" value="Helicase_C-like"/>
</dbReference>
<dbReference type="InterPro" id="IPR027417">
    <property type="entry name" value="P-loop_NTPase"/>
</dbReference>
<dbReference type="InterPro" id="IPR000185">
    <property type="entry name" value="SecA"/>
</dbReference>
<dbReference type="InterPro" id="IPR020937">
    <property type="entry name" value="SecA_CS"/>
</dbReference>
<dbReference type="InterPro" id="IPR011115">
    <property type="entry name" value="SecA_DEAD"/>
</dbReference>
<dbReference type="InterPro" id="IPR014018">
    <property type="entry name" value="SecA_motor_DEAD"/>
</dbReference>
<dbReference type="InterPro" id="IPR011130">
    <property type="entry name" value="SecA_preprotein_X-link_dom"/>
</dbReference>
<dbReference type="InterPro" id="IPR044722">
    <property type="entry name" value="SecA_SF2_C"/>
</dbReference>
<dbReference type="InterPro" id="IPR011116">
    <property type="entry name" value="SecA_Wing/Scaffold"/>
</dbReference>
<dbReference type="InterPro" id="IPR036266">
    <property type="entry name" value="SecA_Wing/Scaffold_sf"/>
</dbReference>
<dbReference type="InterPro" id="IPR036670">
    <property type="entry name" value="SecA_X-link_sf"/>
</dbReference>
<dbReference type="NCBIfam" id="NF006630">
    <property type="entry name" value="PRK09200.1"/>
    <property type="match status" value="1"/>
</dbReference>
<dbReference type="NCBIfam" id="NF009538">
    <property type="entry name" value="PRK12904.1"/>
    <property type="match status" value="1"/>
</dbReference>
<dbReference type="NCBIfam" id="TIGR00963">
    <property type="entry name" value="secA"/>
    <property type="match status" value="1"/>
</dbReference>
<dbReference type="PANTHER" id="PTHR30612:SF0">
    <property type="entry name" value="CHLOROPLAST PROTEIN-TRANSPORTING ATPASE"/>
    <property type="match status" value="1"/>
</dbReference>
<dbReference type="PANTHER" id="PTHR30612">
    <property type="entry name" value="SECA INNER MEMBRANE COMPONENT OF SEC PROTEIN SECRETION SYSTEM"/>
    <property type="match status" value="1"/>
</dbReference>
<dbReference type="Pfam" id="PF21090">
    <property type="entry name" value="P-loop_SecA"/>
    <property type="match status" value="2"/>
</dbReference>
<dbReference type="Pfam" id="PF07517">
    <property type="entry name" value="SecA_DEAD"/>
    <property type="match status" value="1"/>
</dbReference>
<dbReference type="Pfam" id="PF01043">
    <property type="entry name" value="SecA_PP_bind"/>
    <property type="match status" value="1"/>
</dbReference>
<dbReference type="Pfam" id="PF07516">
    <property type="entry name" value="SecA_SW"/>
    <property type="match status" value="1"/>
</dbReference>
<dbReference type="PRINTS" id="PR00906">
    <property type="entry name" value="SECA"/>
</dbReference>
<dbReference type="SMART" id="SM00957">
    <property type="entry name" value="SecA_DEAD"/>
    <property type="match status" value="1"/>
</dbReference>
<dbReference type="SMART" id="SM00958">
    <property type="entry name" value="SecA_PP_bind"/>
    <property type="match status" value="1"/>
</dbReference>
<dbReference type="SUPFAM" id="SSF81886">
    <property type="entry name" value="Helical scaffold and wing domains of SecA"/>
    <property type="match status" value="1"/>
</dbReference>
<dbReference type="SUPFAM" id="SSF52540">
    <property type="entry name" value="P-loop containing nucleoside triphosphate hydrolases"/>
    <property type="match status" value="2"/>
</dbReference>
<dbReference type="SUPFAM" id="SSF81767">
    <property type="entry name" value="Pre-protein crosslinking domain of SecA"/>
    <property type="match status" value="1"/>
</dbReference>
<dbReference type="PROSITE" id="PS01312">
    <property type="entry name" value="SECA"/>
    <property type="match status" value="1"/>
</dbReference>
<dbReference type="PROSITE" id="PS51196">
    <property type="entry name" value="SECA_MOTOR_DEAD"/>
    <property type="match status" value="1"/>
</dbReference>
<accession>C0Z6T7</accession>